<sequence length="212" mass="22109">MARFGVDEAGKGPVLGSMFAAAVAGDPAAVPDGVADSKRLSADRRAELDDRVRASMRVGVAEVPVDRIDDPETDMNTLTVAAQADALGRVVADGMAGYVDAGDVNEQRFGRRVANRVAADVAVTAEHGADDEYDLVAAASIVAKVARDAHVDALAAAFDADIGSGYPSDSTTREFLAAYVREHGELPECARASWQTSRDALGAAEQSALDEF</sequence>
<protein>
    <recommendedName>
        <fullName evidence="1">Ribonuclease HII</fullName>
        <shortName evidence="1">RNase HII</shortName>
        <ecNumber evidence="1">3.1.26.4</ecNumber>
    </recommendedName>
</protein>
<reference key="1">
    <citation type="journal article" date="2000" name="Proc. Natl. Acad. Sci. U.S.A.">
        <title>Genome sequence of Halobacterium species NRC-1.</title>
        <authorList>
            <person name="Ng W.V."/>
            <person name="Kennedy S.P."/>
            <person name="Mahairas G.G."/>
            <person name="Berquist B."/>
            <person name="Pan M."/>
            <person name="Shukla H.D."/>
            <person name="Lasky S.R."/>
            <person name="Baliga N.S."/>
            <person name="Thorsson V."/>
            <person name="Sbrogna J."/>
            <person name="Swartzell S."/>
            <person name="Weir D."/>
            <person name="Hall J."/>
            <person name="Dahl T.A."/>
            <person name="Welti R."/>
            <person name="Goo Y.A."/>
            <person name="Leithauser B."/>
            <person name="Keller K."/>
            <person name="Cruz R."/>
            <person name="Danson M.J."/>
            <person name="Hough D.W."/>
            <person name="Maddocks D.G."/>
            <person name="Jablonski P.E."/>
            <person name="Krebs M.P."/>
            <person name="Angevine C.M."/>
            <person name="Dale H."/>
            <person name="Isenbarger T.A."/>
            <person name="Peck R.F."/>
            <person name="Pohlschroder M."/>
            <person name="Spudich J.L."/>
            <person name="Jung K.-H."/>
            <person name="Alam M."/>
            <person name="Freitas T."/>
            <person name="Hou S."/>
            <person name="Daniels C.J."/>
            <person name="Dennis P.P."/>
            <person name="Omer A.D."/>
            <person name="Ebhardt H."/>
            <person name="Lowe T.M."/>
            <person name="Liang P."/>
            <person name="Riley M."/>
            <person name="Hood L."/>
            <person name="DasSarma S."/>
        </authorList>
    </citation>
    <scope>NUCLEOTIDE SEQUENCE [LARGE SCALE GENOMIC DNA]</scope>
    <source>
        <strain>ATCC 700922 / JCM 11081 / NRC-1</strain>
    </source>
</reference>
<comment type="function">
    <text evidence="1">Endonuclease that specifically degrades the RNA of RNA-DNA hybrids.</text>
</comment>
<comment type="catalytic activity">
    <reaction evidence="1">
        <text>Endonucleolytic cleavage to 5'-phosphomonoester.</text>
        <dbReference type="EC" id="3.1.26.4"/>
    </reaction>
</comment>
<comment type="cofactor">
    <cofactor evidence="1">
        <name>Mn(2+)</name>
        <dbReference type="ChEBI" id="CHEBI:29035"/>
    </cofactor>
    <cofactor evidence="1">
        <name>Mg(2+)</name>
        <dbReference type="ChEBI" id="CHEBI:18420"/>
    </cofactor>
    <text evidence="1">Manganese or magnesium. Binds 1 divalent metal ion per monomer in the absence of substrate. May bind a second metal ion after substrate binding.</text>
</comment>
<comment type="subcellular location">
    <subcellularLocation>
        <location evidence="1">Cytoplasm</location>
    </subcellularLocation>
</comment>
<comment type="similarity">
    <text evidence="1">Belongs to the RNase HII family.</text>
</comment>
<accession>Q9HNR3</accession>
<name>RNH2_HALSA</name>
<keyword id="KW-0963">Cytoplasm</keyword>
<keyword id="KW-0255">Endonuclease</keyword>
<keyword id="KW-0378">Hydrolase</keyword>
<keyword id="KW-0464">Manganese</keyword>
<keyword id="KW-0479">Metal-binding</keyword>
<keyword id="KW-0540">Nuclease</keyword>
<keyword id="KW-1185">Reference proteome</keyword>
<feature type="chain" id="PRO_0000236278" description="Ribonuclease HII">
    <location>
        <begin position="1"/>
        <end position="212"/>
    </location>
</feature>
<feature type="domain" description="RNase H type-2" evidence="2">
    <location>
        <begin position="1"/>
        <end position="206"/>
    </location>
</feature>
<feature type="binding site" evidence="1">
    <location>
        <position position="7"/>
    </location>
    <ligand>
        <name>a divalent metal cation</name>
        <dbReference type="ChEBI" id="CHEBI:60240"/>
    </ligand>
</feature>
<feature type="binding site" evidence="1">
    <location>
        <position position="8"/>
    </location>
    <ligand>
        <name>a divalent metal cation</name>
        <dbReference type="ChEBI" id="CHEBI:60240"/>
    </ligand>
</feature>
<feature type="binding site" evidence="1">
    <location>
        <position position="100"/>
    </location>
    <ligand>
        <name>a divalent metal cation</name>
        <dbReference type="ChEBI" id="CHEBI:60240"/>
    </ligand>
</feature>
<gene>
    <name evidence="1" type="primary">rnhB</name>
    <name type="ordered locus">VNG_1984G</name>
</gene>
<dbReference type="EC" id="3.1.26.4" evidence="1"/>
<dbReference type="EMBL" id="AE004437">
    <property type="protein sequence ID" value="AAG20157.1"/>
    <property type="molecule type" value="Genomic_DNA"/>
</dbReference>
<dbReference type="PIR" id="A84349">
    <property type="entry name" value="A84349"/>
</dbReference>
<dbReference type="RefSeq" id="WP_010903458.1">
    <property type="nucleotide sequence ID" value="NC_002607.1"/>
</dbReference>
<dbReference type="SMR" id="Q9HNR3"/>
<dbReference type="FunCoup" id="Q9HNR3">
    <property type="interactions" value="109"/>
</dbReference>
<dbReference type="STRING" id="64091.VNG_1984G"/>
<dbReference type="PaxDb" id="64091-VNG_1984G"/>
<dbReference type="GeneID" id="89350172"/>
<dbReference type="KEGG" id="hal:VNG_1984G"/>
<dbReference type="PATRIC" id="fig|64091.14.peg.1514"/>
<dbReference type="HOGENOM" id="CLU_036532_0_4_2"/>
<dbReference type="InParanoid" id="Q9HNR3"/>
<dbReference type="OrthoDB" id="33866at2157"/>
<dbReference type="PhylomeDB" id="Q9HNR3"/>
<dbReference type="Proteomes" id="UP000000554">
    <property type="component" value="Chromosome"/>
</dbReference>
<dbReference type="GO" id="GO:0005737">
    <property type="term" value="C:cytoplasm"/>
    <property type="evidence" value="ECO:0007669"/>
    <property type="project" value="UniProtKB-SubCell"/>
</dbReference>
<dbReference type="GO" id="GO:0032299">
    <property type="term" value="C:ribonuclease H2 complex"/>
    <property type="evidence" value="ECO:0000318"/>
    <property type="project" value="GO_Central"/>
</dbReference>
<dbReference type="GO" id="GO:0030145">
    <property type="term" value="F:manganese ion binding"/>
    <property type="evidence" value="ECO:0007669"/>
    <property type="project" value="UniProtKB-UniRule"/>
</dbReference>
<dbReference type="GO" id="GO:0003723">
    <property type="term" value="F:RNA binding"/>
    <property type="evidence" value="ECO:0007669"/>
    <property type="project" value="InterPro"/>
</dbReference>
<dbReference type="GO" id="GO:0004523">
    <property type="term" value="F:RNA-DNA hybrid ribonuclease activity"/>
    <property type="evidence" value="ECO:0000318"/>
    <property type="project" value="GO_Central"/>
</dbReference>
<dbReference type="GO" id="GO:0043137">
    <property type="term" value="P:DNA replication, removal of RNA primer"/>
    <property type="evidence" value="ECO:0000318"/>
    <property type="project" value="GO_Central"/>
</dbReference>
<dbReference type="GO" id="GO:0006298">
    <property type="term" value="P:mismatch repair"/>
    <property type="evidence" value="ECO:0000318"/>
    <property type="project" value="GO_Central"/>
</dbReference>
<dbReference type="CDD" id="cd07180">
    <property type="entry name" value="RNase_HII_archaea_like"/>
    <property type="match status" value="1"/>
</dbReference>
<dbReference type="FunFam" id="1.10.10.460:FF:000001">
    <property type="entry name" value="Ribonuclease"/>
    <property type="match status" value="1"/>
</dbReference>
<dbReference type="Gene3D" id="3.30.420.10">
    <property type="entry name" value="Ribonuclease H-like superfamily/Ribonuclease H"/>
    <property type="match status" value="1"/>
</dbReference>
<dbReference type="Gene3D" id="1.10.10.460">
    <property type="entry name" value="Ribonuclease hii. Domain 2"/>
    <property type="match status" value="1"/>
</dbReference>
<dbReference type="HAMAP" id="MF_00052_A">
    <property type="entry name" value="RNase_HII_A"/>
    <property type="match status" value="1"/>
</dbReference>
<dbReference type="InterPro" id="IPR004649">
    <property type="entry name" value="RNase_H2_suA"/>
</dbReference>
<dbReference type="InterPro" id="IPR001352">
    <property type="entry name" value="RNase_HII/HIII"/>
</dbReference>
<dbReference type="InterPro" id="IPR024567">
    <property type="entry name" value="RNase_HII/HIII_dom"/>
</dbReference>
<dbReference type="InterPro" id="IPR020787">
    <property type="entry name" value="RNase_HII_arc"/>
</dbReference>
<dbReference type="InterPro" id="IPR023160">
    <property type="entry name" value="RNase_HII_hlx-loop-hlx_cap_dom"/>
</dbReference>
<dbReference type="InterPro" id="IPR012337">
    <property type="entry name" value="RNaseH-like_sf"/>
</dbReference>
<dbReference type="InterPro" id="IPR036397">
    <property type="entry name" value="RNaseH_sf"/>
</dbReference>
<dbReference type="NCBIfam" id="TIGR00729">
    <property type="entry name" value="ribonuclease HII"/>
    <property type="match status" value="1"/>
</dbReference>
<dbReference type="PANTHER" id="PTHR10954:SF23">
    <property type="entry name" value="RIBONUCLEASE"/>
    <property type="match status" value="1"/>
</dbReference>
<dbReference type="PANTHER" id="PTHR10954">
    <property type="entry name" value="RIBONUCLEASE H2 SUBUNIT A"/>
    <property type="match status" value="1"/>
</dbReference>
<dbReference type="Pfam" id="PF01351">
    <property type="entry name" value="RNase_HII"/>
    <property type="match status" value="1"/>
</dbReference>
<dbReference type="SUPFAM" id="SSF53098">
    <property type="entry name" value="Ribonuclease H-like"/>
    <property type="match status" value="1"/>
</dbReference>
<dbReference type="PROSITE" id="PS51975">
    <property type="entry name" value="RNASE_H_2"/>
    <property type="match status" value="1"/>
</dbReference>
<organism>
    <name type="scientific">Halobacterium salinarum (strain ATCC 700922 / JCM 11081 / NRC-1)</name>
    <name type="common">Halobacterium halobium</name>
    <dbReference type="NCBI Taxonomy" id="64091"/>
    <lineage>
        <taxon>Archaea</taxon>
        <taxon>Methanobacteriati</taxon>
        <taxon>Methanobacteriota</taxon>
        <taxon>Stenosarchaea group</taxon>
        <taxon>Halobacteria</taxon>
        <taxon>Halobacteriales</taxon>
        <taxon>Halobacteriaceae</taxon>
        <taxon>Halobacterium</taxon>
        <taxon>Halobacterium salinarum NRC-34001</taxon>
    </lineage>
</organism>
<proteinExistence type="inferred from homology"/>
<evidence type="ECO:0000255" key="1">
    <source>
        <dbReference type="HAMAP-Rule" id="MF_00052"/>
    </source>
</evidence>
<evidence type="ECO:0000255" key="2">
    <source>
        <dbReference type="PROSITE-ProRule" id="PRU01319"/>
    </source>
</evidence>